<sequence>MASAGGCKKKTGNSRSRSPRSPVVLRRAMLHSSLCFLVGLLAGLAAPSDWPAAAGAAVFLRTLRASNVIFSRSSNRPQQPQLVVVVTTTEQSDDSERRAAGLTRTAHALRLVSPPLLWLVVEEAPAEKHAAPPTARLLRRTGVVHRHLLMKQGDDDFSMQISMRREQQRNVALRHIEDHRIAGVVLFGGLADIYDLRLLHHLRDIRTFGAWPVATVSAYERKVMVQGPLCINTSSSSVITRGWFDMDMDMAAGGERRAAADRPPPETLMEVGGFAFSSWMLWDPHRWDRFPLSDPDASQESVKFVQRVAVEEYNQSTTRGMPDSDCSQIMLWRIQTTL</sequence>
<protein>
    <recommendedName>
        <fullName evidence="6">Probable beta-1,4-xylosyltransferase IRX9</fullName>
        <ecNumber evidence="6">2.4.2.-</ecNumber>
    </recommendedName>
    <alternativeName>
        <fullName evidence="5">OsGT43C</fullName>
    </alternativeName>
    <alternativeName>
        <fullName evidence="6">Probable glucuronosyltransferase Os07g0694400</fullName>
    </alternativeName>
    <alternativeName>
        <fullName evidence="6">Protein IRREGULAR XYLEM 9 homolog</fullName>
        <shortName evidence="4">OsIRX9</shortName>
    </alternativeName>
</protein>
<name>IRX9_ORYSJ</name>
<keyword id="KW-0961">Cell wall biogenesis/degradation</keyword>
<keyword id="KW-0325">Glycoprotein</keyword>
<keyword id="KW-0328">Glycosyltransferase</keyword>
<keyword id="KW-0333">Golgi apparatus</keyword>
<keyword id="KW-0472">Membrane</keyword>
<keyword id="KW-1185">Reference proteome</keyword>
<keyword id="KW-0735">Signal-anchor</keyword>
<keyword id="KW-0808">Transferase</keyword>
<keyword id="KW-0812">Transmembrane</keyword>
<keyword id="KW-1133">Transmembrane helix</keyword>
<accession>Q6Z3Y6</accession>
<accession>A0A023NCQ5</accession>
<dbReference type="EC" id="2.4.2.-" evidence="6"/>
<dbReference type="EMBL" id="KJ206900">
    <property type="protein sequence ID" value="AHW98783.1"/>
    <property type="molecule type" value="mRNA"/>
</dbReference>
<dbReference type="EMBL" id="AP005199">
    <property type="protein sequence ID" value="BAC84059.1"/>
    <property type="molecule type" value="Genomic_DNA"/>
</dbReference>
<dbReference type="EMBL" id="AP008213">
    <property type="protein sequence ID" value="BAF22652.1"/>
    <property type="molecule type" value="Genomic_DNA"/>
</dbReference>
<dbReference type="EMBL" id="AP014963">
    <property type="protein sequence ID" value="BAT03373.1"/>
    <property type="molecule type" value="Genomic_DNA"/>
</dbReference>
<dbReference type="EMBL" id="AK060667">
    <property type="protein sequence ID" value="BAG87531.1"/>
    <property type="molecule type" value="mRNA"/>
</dbReference>
<dbReference type="RefSeq" id="XP_015646092.1">
    <property type="nucleotide sequence ID" value="XM_015790606.1"/>
</dbReference>
<dbReference type="SMR" id="Q6Z3Y6"/>
<dbReference type="STRING" id="39947.Q6Z3Y6"/>
<dbReference type="CAZy" id="GT43">
    <property type="family name" value="Glycosyltransferase Family 43"/>
</dbReference>
<dbReference type="GlyCosmos" id="Q6Z3Y6">
    <property type="glycosylation" value="2 sites, No reported glycans"/>
</dbReference>
<dbReference type="PaxDb" id="39947-Q6Z3Y6"/>
<dbReference type="EnsemblPlants" id="Os07t0694400-01">
    <property type="protein sequence ID" value="Os07t0694400-01"/>
    <property type="gene ID" value="Os07g0694400"/>
</dbReference>
<dbReference type="Gramene" id="Os07t0694400-01">
    <property type="protein sequence ID" value="Os07t0694400-01"/>
    <property type="gene ID" value="Os07g0694400"/>
</dbReference>
<dbReference type="KEGG" id="dosa:Os07g0694400"/>
<dbReference type="eggNOG" id="KOG1476">
    <property type="taxonomic scope" value="Eukaryota"/>
</dbReference>
<dbReference type="HOGENOM" id="CLU_044006_2_0_1"/>
<dbReference type="InParanoid" id="Q6Z3Y6"/>
<dbReference type="OMA" id="HRHLLMK"/>
<dbReference type="OrthoDB" id="675023at2759"/>
<dbReference type="Proteomes" id="UP000000763">
    <property type="component" value="Chromosome 7"/>
</dbReference>
<dbReference type="Proteomes" id="UP000059680">
    <property type="component" value="Chromosome 7"/>
</dbReference>
<dbReference type="GO" id="GO:0000139">
    <property type="term" value="C:Golgi membrane"/>
    <property type="evidence" value="ECO:0000318"/>
    <property type="project" value="GO_Central"/>
</dbReference>
<dbReference type="GO" id="GO:0015018">
    <property type="term" value="F:galactosylgalactosylxylosylprotein 3-beta-glucuronosyltransferase activity"/>
    <property type="evidence" value="ECO:0007669"/>
    <property type="project" value="InterPro"/>
</dbReference>
<dbReference type="GO" id="GO:0042285">
    <property type="term" value="F:xylosyltransferase activity"/>
    <property type="evidence" value="ECO:0000318"/>
    <property type="project" value="GO_Central"/>
</dbReference>
<dbReference type="GO" id="GO:0071555">
    <property type="term" value="P:cell wall organization"/>
    <property type="evidence" value="ECO:0007669"/>
    <property type="project" value="UniProtKB-KW"/>
</dbReference>
<dbReference type="GO" id="GO:0010417">
    <property type="term" value="P:glucuronoxylan biosynthetic process"/>
    <property type="evidence" value="ECO:0000318"/>
    <property type="project" value="GO_Central"/>
</dbReference>
<dbReference type="GO" id="GO:0009834">
    <property type="term" value="P:plant-type secondary cell wall biogenesis"/>
    <property type="evidence" value="ECO:0000318"/>
    <property type="project" value="GO_Central"/>
</dbReference>
<dbReference type="GO" id="GO:0045492">
    <property type="term" value="P:xylan biosynthetic process"/>
    <property type="evidence" value="ECO:0000314"/>
    <property type="project" value="UniProtKB"/>
</dbReference>
<dbReference type="FunFam" id="3.90.550.10:FF:000227">
    <property type="entry name" value="Glycosyltransferases"/>
    <property type="match status" value="1"/>
</dbReference>
<dbReference type="Gene3D" id="3.90.550.10">
    <property type="entry name" value="Spore Coat Polysaccharide Biosynthesis Protein SpsA, Chain A"/>
    <property type="match status" value="1"/>
</dbReference>
<dbReference type="InterPro" id="IPR005027">
    <property type="entry name" value="Glyco_trans_43"/>
</dbReference>
<dbReference type="InterPro" id="IPR029044">
    <property type="entry name" value="Nucleotide-diphossugar_trans"/>
</dbReference>
<dbReference type="PANTHER" id="PTHR10896:SF26">
    <property type="entry name" value="BETA-1,4-XYLOSYLTRANSFERASE IRX9-RELATED"/>
    <property type="match status" value="1"/>
</dbReference>
<dbReference type="PANTHER" id="PTHR10896">
    <property type="entry name" value="GALACTOSYLGALACTOSYLXYLOSYLPROTEIN 3-BETA-GLUCURONOSYLTRANSFERASE BETA-1,3-GLUCURONYLTRANSFERASE"/>
    <property type="match status" value="1"/>
</dbReference>
<dbReference type="Pfam" id="PF03360">
    <property type="entry name" value="Glyco_transf_43"/>
    <property type="match status" value="1"/>
</dbReference>
<dbReference type="SUPFAM" id="SSF53448">
    <property type="entry name" value="Nucleotide-diphospho-sugar transferases"/>
    <property type="match status" value="1"/>
</dbReference>
<feature type="chain" id="PRO_0000407561" description="Probable beta-1,4-xylosyltransferase IRX9">
    <location>
        <begin position="1"/>
        <end position="338"/>
    </location>
</feature>
<feature type="topological domain" description="Cytoplasmic" evidence="6">
    <location>
        <begin position="1"/>
        <end position="27"/>
    </location>
</feature>
<feature type="transmembrane region" description="Helical; Signal-anchor for type II membrane protein" evidence="1">
    <location>
        <begin position="28"/>
        <end position="46"/>
    </location>
</feature>
<feature type="topological domain" description="Lumenal" evidence="6">
    <location>
        <begin position="47"/>
        <end position="338"/>
    </location>
</feature>
<feature type="region of interest" description="Disordered" evidence="2">
    <location>
        <begin position="1"/>
        <end position="21"/>
    </location>
</feature>
<feature type="glycosylation site" description="N-linked (GlcNAc...) asparagine" evidence="1">
    <location>
        <position position="232"/>
    </location>
</feature>
<feature type="glycosylation site" description="N-linked (GlcNAc...) asparagine" evidence="1">
    <location>
        <position position="314"/>
    </location>
</feature>
<gene>
    <name evidence="4" type="primary">IRX9</name>
    <name evidence="8" type="ordered locus">Os07g0694400</name>
    <name evidence="6" type="ordered locus">LOC_Os07g49370</name>
    <name evidence="7" type="ORF">P0627E10.10</name>
</gene>
<proteinExistence type="evidence at transcript level"/>
<comment type="function">
    <text evidence="3">Probable beta-1,4-xylosyltransferase involved in xylan biosynthesis in cell walls.</text>
</comment>
<comment type="subcellular location">
    <subcellularLocation>
        <location evidence="6">Golgi apparatus membrane</location>
        <topology evidence="1">Single-pass type II membrane protein</topology>
    </subcellularLocation>
</comment>
<comment type="similarity">
    <text evidence="6">Belongs to the glycosyltransferase 43 family.</text>
</comment>
<organism>
    <name type="scientific">Oryza sativa subsp. japonica</name>
    <name type="common">Rice</name>
    <dbReference type="NCBI Taxonomy" id="39947"/>
    <lineage>
        <taxon>Eukaryota</taxon>
        <taxon>Viridiplantae</taxon>
        <taxon>Streptophyta</taxon>
        <taxon>Embryophyta</taxon>
        <taxon>Tracheophyta</taxon>
        <taxon>Spermatophyta</taxon>
        <taxon>Magnoliopsida</taxon>
        <taxon>Liliopsida</taxon>
        <taxon>Poales</taxon>
        <taxon>Poaceae</taxon>
        <taxon>BOP clade</taxon>
        <taxon>Oryzoideae</taxon>
        <taxon>Oryzeae</taxon>
        <taxon>Oryzinae</taxon>
        <taxon>Oryza</taxon>
        <taxon>Oryza sativa</taxon>
    </lineage>
</organism>
<reference key="1">
    <citation type="journal article" date="2014" name="Plant Signal. Behav.">
        <title>Functional roles of rice glycosyltransferase family GT43 in xylan biosynthesis.</title>
        <authorList>
            <person name="Lee C."/>
            <person name="Teng Q."/>
            <person name="Zhong R."/>
            <person name="Yuan Y."/>
            <person name="Ye Z.H."/>
        </authorList>
    </citation>
    <scope>NUCLEOTIDE SEQUENCE [MRNA]</scope>
</reference>
<reference key="2">
    <citation type="journal article" date="2005" name="Nature">
        <title>The map-based sequence of the rice genome.</title>
        <authorList>
            <consortium name="International rice genome sequencing project (IRGSP)"/>
        </authorList>
    </citation>
    <scope>NUCLEOTIDE SEQUENCE [LARGE SCALE GENOMIC DNA]</scope>
    <source>
        <strain>cv. Nipponbare</strain>
    </source>
</reference>
<reference key="3">
    <citation type="journal article" date="2008" name="Nucleic Acids Res.">
        <title>The rice annotation project database (RAP-DB): 2008 update.</title>
        <authorList>
            <consortium name="The rice annotation project (RAP)"/>
        </authorList>
    </citation>
    <scope>GENOME REANNOTATION</scope>
    <source>
        <strain>cv. Nipponbare</strain>
    </source>
</reference>
<reference key="4">
    <citation type="journal article" date="2013" name="Rice">
        <title>Improvement of the Oryza sativa Nipponbare reference genome using next generation sequence and optical map data.</title>
        <authorList>
            <person name="Kawahara Y."/>
            <person name="de la Bastide M."/>
            <person name="Hamilton J.P."/>
            <person name="Kanamori H."/>
            <person name="McCombie W.R."/>
            <person name="Ouyang S."/>
            <person name="Schwartz D.C."/>
            <person name="Tanaka T."/>
            <person name="Wu J."/>
            <person name="Zhou S."/>
            <person name="Childs K.L."/>
            <person name="Davidson R.M."/>
            <person name="Lin H."/>
            <person name="Quesada-Ocampo L."/>
            <person name="Vaillancourt B."/>
            <person name="Sakai H."/>
            <person name="Lee S.S."/>
            <person name="Kim J."/>
            <person name="Numa H."/>
            <person name="Itoh T."/>
            <person name="Buell C.R."/>
            <person name="Matsumoto T."/>
        </authorList>
    </citation>
    <scope>GENOME REANNOTATION</scope>
    <source>
        <strain>cv. Nipponbare</strain>
    </source>
</reference>
<reference key="5">
    <citation type="journal article" date="2003" name="Science">
        <title>Collection, mapping, and annotation of over 28,000 cDNA clones from japonica rice.</title>
        <authorList>
            <consortium name="The rice full-length cDNA consortium"/>
        </authorList>
    </citation>
    <scope>NUCLEOTIDE SEQUENCE [LARGE SCALE MRNA]</scope>
    <source>
        <strain>cv. Nipponbare</strain>
    </source>
</reference>
<reference key="6">
    <citation type="journal article" date="2013" name="Front. Plant Sci.">
        <title>Three novel rice genes closely related to the Arabidopsis IRX9, IRX9L, and IRX14 genes and their roles in xylan biosynthesis.</title>
        <authorList>
            <person name="Chiniquy D."/>
            <person name="Varanasi P."/>
            <person name="Oh T."/>
            <person name="Harholt J."/>
            <person name="Katnelson J."/>
            <person name="Singh S."/>
            <person name="Auer M."/>
            <person name="Simmons B."/>
            <person name="Adams P.D."/>
            <person name="Scheller H.V."/>
            <person name="Ronald P.C."/>
        </authorList>
    </citation>
    <scope>FUNCTION</scope>
</reference>
<evidence type="ECO:0000255" key="1"/>
<evidence type="ECO:0000256" key="2">
    <source>
        <dbReference type="SAM" id="MobiDB-lite"/>
    </source>
</evidence>
<evidence type="ECO:0000269" key="3">
    <source>
    </source>
</evidence>
<evidence type="ECO:0000303" key="4">
    <source>
    </source>
</evidence>
<evidence type="ECO:0000303" key="5">
    <source>
    </source>
</evidence>
<evidence type="ECO:0000305" key="6"/>
<evidence type="ECO:0000312" key="7">
    <source>
        <dbReference type="EMBL" id="BAC84059.1"/>
    </source>
</evidence>
<evidence type="ECO:0000312" key="8">
    <source>
        <dbReference type="EMBL" id="BAT03373.1"/>
    </source>
</evidence>